<dbReference type="EMBL" id="AE010299">
    <property type="protein sequence ID" value="AAM05190.1"/>
    <property type="molecule type" value="Genomic_DNA"/>
</dbReference>
<dbReference type="RefSeq" id="WP_011021787.1">
    <property type="nucleotide sequence ID" value="NC_003552.1"/>
</dbReference>
<dbReference type="SMR" id="Q8TPX0"/>
<dbReference type="FunCoup" id="Q8TPX0">
    <property type="interactions" value="167"/>
</dbReference>
<dbReference type="STRING" id="188937.MA_1784"/>
<dbReference type="EnsemblBacteria" id="AAM05190">
    <property type="protein sequence ID" value="AAM05190"/>
    <property type="gene ID" value="MA_1784"/>
</dbReference>
<dbReference type="GeneID" id="1473673"/>
<dbReference type="KEGG" id="mac:MA_1784"/>
<dbReference type="HOGENOM" id="CLU_080796_1_0_2"/>
<dbReference type="InParanoid" id="Q8TPX0"/>
<dbReference type="OrthoDB" id="8183at2157"/>
<dbReference type="PhylomeDB" id="Q8TPX0"/>
<dbReference type="Proteomes" id="UP000002487">
    <property type="component" value="Chromosome"/>
</dbReference>
<dbReference type="GO" id="GO:0022625">
    <property type="term" value="C:cytosolic large ribosomal subunit"/>
    <property type="evidence" value="ECO:0000318"/>
    <property type="project" value="GO_Central"/>
</dbReference>
<dbReference type="GO" id="GO:0003723">
    <property type="term" value="F:RNA binding"/>
    <property type="evidence" value="ECO:0000318"/>
    <property type="project" value="GO_Central"/>
</dbReference>
<dbReference type="GO" id="GO:0003735">
    <property type="term" value="F:structural constituent of ribosome"/>
    <property type="evidence" value="ECO:0000318"/>
    <property type="project" value="GO_Central"/>
</dbReference>
<dbReference type="GO" id="GO:0002181">
    <property type="term" value="P:cytoplasmic translation"/>
    <property type="evidence" value="ECO:0000318"/>
    <property type="project" value="GO_Central"/>
</dbReference>
<dbReference type="FunFam" id="3.40.1120.10:FF:000002">
    <property type="entry name" value="50S ribosomal protein L15e"/>
    <property type="match status" value="1"/>
</dbReference>
<dbReference type="Gene3D" id="3.40.1120.10">
    <property type="entry name" value="Ribosomal protein l15e"/>
    <property type="match status" value="1"/>
</dbReference>
<dbReference type="HAMAP" id="MF_00256">
    <property type="entry name" value="Ribosomal_eL15"/>
    <property type="match status" value="1"/>
</dbReference>
<dbReference type="InterPro" id="IPR024794">
    <property type="entry name" value="Rbsml_eL15_core_dom_sf"/>
</dbReference>
<dbReference type="InterPro" id="IPR000439">
    <property type="entry name" value="Ribosomal_eL15"/>
</dbReference>
<dbReference type="InterPro" id="IPR020926">
    <property type="entry name" value="Ribosomal_eL15_arc"/>
</dbReference>
<dbReference type="InterPro" id="IPR020925">
    <property type="entry name" value="Ribosomal_eL15_CS"/>
</dbReference>
<dbReference type="InterPro" id="IPR012678">
    <property type="entry name" value="Ribosomal_uL23/eL15/eS24_sf"/>
</dbReference>
<dbReference type="NCBIfam" id="NF003269">
    <property type="entry name" value="PRK04243.1"/>
    <property type="match status" value="1"/>
</dbReference>
<dbReference type="PANTHER" id="PTHR11847:SF4">
    <property type="entry name" value="LARGE RIBOSOMAL SUBUNIT PROTEIN EL15"/>
    <property type="match status" value="1"/>
</dbReference>
<dbReference type="PANTHER" id="PTHR11847">
    <property type="entry name" value="RIBOSOMAL PROTEIN L15"/>
    <property type="match status" value="1"/>
</dbReference>
<dbReference type="Pfam" id="PF00827">
    <property type="entry name" value="Ribosomal_L15e"/>
    <property type="match status" value="1"/>
</dbReference>
<dbReference type="SMART" id="SM01384">
    <property type="entry name" value="Ribosomal_L15e"/>
    <property type="match status" value="1"/>
</dbReference>
<dbReference type="SUPFAM" id="SSF54189">
    <property type="entry name" value="Ribosomal proteins S24e, L23 and L15e"/>
    <property type="match status" value="1"/>
</dbReference>
<dbReference type="PROSITE" id="PS01194">
    <property type="entry name" value="RIBOSOMAL_L15E"/>
    <property type="match status" value="1"/>
</dbReference>
<comment type="similarity">
    <text evidence="1">Belongs to the eukaryotic ribosomal protein eL15 family.</text>
</comment>
<name>RL15E_METAC</name>
<reference key="1">
    <citation type="journal article" date="2002" name="Genome Res.">
        <title>The genome of Methanosarcina acetivorans reveals extensive metabolic and physiological diversity.</title>
        <authorList>
            <person name="Galagan J.E."/>
            <person name="Nusbaum C."/>
            <person name="Roy A."/>
            <person name="Endrizzi M.G."/>
            <person name="Macdonald P."/>
            <person name="FitzHugh W."/>
            <person name="Calvo S."/>
            <person name="Engels R."/>
            <person name="Smirnov S."/>
            <person name="Atnoor D."/>
            <person name="Brown A."/>
            <person name="Allen N."/>
            <person name="Naylor J."/>
            <person name="Stange-Thomann N."/>
            <person name="DeArellano K."/>
            <person name="Johnson R."/>
            <person name="Linton L."/>
            <person name="McEwan P."/>
            <person name="McKernan K."/>
            <person name="Talamas J."/>
            <person name="Tirrell A."/>
            <person name="Ye W."/>
            <person name="Zimmer A."/>
            <person name="Barber R.D."/>
            <person name="Cann I."/>
            <person name="Graham D.E."/>
            <person name="Grahame D.A."/>
            <person name="Guss A.M."/>
            <person name="Hedderich R."/>
            <person name="Ingram-Smith C."/>
            <person name="Kuettner H.C."/>
            <person name="Krzycki J.A."/>
            <person name="Leigh J.A."/>
            <person name="Li W."/>
            <person name="Liu J."/>
            <person name="Mukhopadhyay B."/>
            <person name="Reeve J.N."/>
            <person name="Smith K."/>
            <person name="Springer T.A."/>
            <person name="Umayam L.A."/>
            <person name="White O."/>
            <person name="White R.H."/>
            <person name="de Macario E.C."/>
            <person name="Ferry J.G."/>
            <person name="Jarrell K.F."/>
            <person name="Jing H."/>
            <person name="Macario A.J.L."/>
            <person name="Paulsen I.T."/>
            <person name="Pritchett M."/>
            <person name="Sowers K.R."/>
            <person name="Swanson R.V."/>
            <person name="Zinder S.H."/>
            <person name="Lander E."/>
            <person name="Metcalf W.W."/>
            <person name="Birren B."/>
        </authorList>
    </citation>
    <scope>NUCLEOTIDE SEQUENCE [LARGE SCALE GENOMIC DNA]</scope>
    <source>
        <strain>ATCC 35395 / DSM 2834 / JCM 12185 / C2A</strain>
    </source>
</reference>
<gene>
    <name evidence="1" type="primary">rpl15e</name>
    <name type="ordered locus">MA_1784</name>
</gene>
<proteinExistence type="inferred from homology"/>
<evidence type="ECO:0000255" key="1">
    <source>
        <dbReference type="HAMAP-Rule" id="MF_00256"/>
    </source>
</evidence>
<evidence type="ECO:0000256" key="2">
    <source>
        <dbReference type="SAM" id="MobiDB-lite"/>
    </source>
</evidence>
<evidence type="ECO:0000305" key="3"/>
<sequence>MVKSFYGYVRDAWKNPDETYVNELRWERLQVWRKQGSVTRIERPTRIDRARSLGYKAKQGIVVVRVNVRRGGLGHVRPNRGRRTQKMGKNKVSGGMSIQRIAEVRADRRYPNLEVLNSYWVGEDGKHKWFEVILVDPHHPVIKSDKNLNWVCDPSSRGRATRGKTSAGRKGRGMATRGKGTEKTRPSIRAYKSRGK</sequence>
<accession>Q8TPX0</accession>
<feature type="chain" id="PRO_0000127572" description="Large ribosomal subunit protein eL15">
    <location>
        <begin position="1"/>
        <end position="196"/>
    </location>
</feature>
<feature type="region of interest" description="Disordered" evidence="2">
    <location>
        <begin position="153"/>
        <end position="196"/>
    </location>
</feature>
<feature type="compositionally biased region" description="Basic residues" evidence="2">
    <location>
        <begin position="159"/>
        <end position="172"/>
    </location>
</feature>
<keyword id="KW-1185">Reference proteome</keyword>
<keyword id="KW-0687">Ribonucleoprotein</keyword>
<keyword id="KW-0689">Ribosomal protein</keyword>
<organism>
    <name type="scientific">Methanosarcina acetivorans (strain ATCC 35395 / DSM 2834 / JCM 12185 / C2A)</name>
    <dbReference type="NCBI Taxonomy" id="188937"/>
    <lineage>
        <taxon>Archaea</taxon>
        <taxon>Methanobacteriati</taxon>
        <taxon>Methanobacteriota</taxon>
        <taxon>Stenosarchaea group</taxon>
        <taxon>Methanomicrobia</taxon>
        <taxon>Methanosarcinales</taxon>
        <taxon>Methanosarcinaceae</taxon>
        <taxon>Methanosarcina</taxon>
    </lineage>
</organism>
<protein>
    <recommendedName>
        <fullName evidence="1">Large ribosomal subunit protein eL15</fullName>
    </recommendedName>
    <alternativeName>
        <fullName evidence="3">50S ribosomal protein L15e</fullName>
    </alternativeName>
</protein>